<sequence length="790" mass="90954">MSTPLRGSSPQVSFYESELDQEGGSDASHFTYRNYMEDDKINSFTFNMARKDQTQLFQRIILTNESESEIEEYAEVAEQLLDAINLREKYVFHPKIWKADAPVGEKPPYSPFESDESTNCATEHMFKEVNGVYFVYSNETDMKSNKALFSVPHTLASYYKDINNLMMLSSYGPAKTFTFKRLQLLESKFNMHTLLNDSLELFQQKTAPHRDFYNVRKVDTHVHHSSSMNQKHLLKFIKRKLKENPNEIVIFRDDKYLTLAEVFKSLNLDVDELSVDTLDVHADNNTFHRFDKFNLKYNPCGQSRLREIFLKTDNLIKGKYLAEISKEVFTDLESSKYQCAEYRLSIYGRKMSEWDTLASWIVDNDLFSTKVRWLIQVPRLYDVYRETSTTTFQDFLNNVFHPLFEVTKDPSSHPKLHLFLQQVVGIDCVDDESKFEKKFTEKFPVPGEWSSEHNPPYTYYLYYLYANLYTLNQFREEKGLNILTLRPHSGEAGEVDHMGAAFYLAHGINHGINLRKTPVLQYLYYLTQIGIAMSPLSNNSLFLTYNRNPFPAFFARGLNVSISTDDPLQFHYTKEPLMEEYSIATQVWRLSVCDICEIARNSVLQSGFEHNVKSHWLGPDYANSGGNDIKKTNISDIRVCFRNETLIEELHLILKSLQTLPNFKNLNINFLLDKLPSEITTGNDYKLKKAQLKLNGANKLRNSSVGSTPNNGTPSSSGTPSLSSPGAIVHLMKTKPYIPPPLSLNIKQENNNNNNNNNNNNNNNNNNNTNTNTNSNSTTTNQDDNSKSDK</sequence>
<organism>
    <name type="scientific">Dictyostelium discoideum</name>
    <name type="common">Social amoeba</name>
    <dbReference type="NCBI Taxonomy" id="44689"/>
    <lineage>
        <taxon>Eukaryota</taxon>
        <taxon>Amoebozoa</taxon>
        <taxon>Evosea</taxon>
        <taxon>Eumycetozoa</taxon>
        <taxon>Dictyostelia</taxon>
        <taxon>Dictyosteliales</taxon>
        <taxon>Dictyosteliaceae</taxon>
        <taxon>Dictyostelium</taxon>
    </lineage>
</organism>
<gene>
    <name type="primary">amdA</name>
    <name type="ORF">DDB_G0292266</name>
</gene>
<name>AMPD_DICDI</name>
<proteinExistence type="evidence at protein level"/>
<evidence type="ECO:0000250" key="1"/>
<evidence type="ECO:0000255" key="2">
    <source>
        <dbReference type="PROSITE-ProRule" id="PRU10104"/>
    </source>
</evidence>
<evidence type="ECO:0000256" key="3">
    <source>
        <dbReference type="SAM" id="MobiDB-lite"/>
    </source>
</evidence>
<evidence type="ECO:0000269" key="4">
    <source>
    </source>
</evidence>
<evidence type="ECO:0000269" key="5">
    <source>
    </source>
</evidence>
<evidence type="ECO:0000269" key="6">
    <source>
    </source>
</evidence>
<evidence type="ECO:0000303" key="7">
    <source>
    </source>
</evidence>
<evidence type="ECO:0000303" key="8">
    <source>
    </source>
</evidence>
<evidence type="ECO:0000303" key="9">
    <source>
    </source>
</evidence>
<evidence type="ECO:0000305" key="10"/>
<evidence type="ECO:0000305" key="11">
    <source>
    </source>
</evidence>
<evidence type="ECO:0000305" key="12">
    <source>
    </source>
</evidence>
<dbReference type="EC" id="3.5.4.6" evidence="4 6"/>
<dbReference type="EMBL" id="AAFI02000189">
    <property type="protein sequence ID" value="EAL61257.1"/>
    <property type="molecule type" value="Genomic_DNA"/>
</dbReference>
<dbReference type="EMBL" id="AF238311">
    <property type="protein sequence ID" value="AAF65407.1"/>
    <property type="molecule type" value="Genomic_DNA"/>
</dbReference>
<dbReference type="RefSeq" id="XP_629711.1">
    <property type="nucleotide sequence ID" value="XM_629709.1"/>
</dbReference>
<dbReference type="SMR" id="Q54DD0"/>
<dbReference type="FunCoup" id="Q54DD0">
    <property type="interactions" value="564"/>
</dbReference>
<dbReference type="STRING" id="44689.Q54DD0"/>
<dbReference type="GlyGen" id="Q54DD0">
    <property type="glycosylation" value="2 sites"/>
</dbReference>
<dbReference type="PaxDb" id="44689-DDB0191089"/>
<dbReference type="EnsemblProtists" id="EAL61257">
    <property type="protein sequence ID" value="EAL61257"/>
    <property type="gene ID" value="DDB_G0292266"/>
</dbReference>
<dbReference type="GeneID" id="8628625"/>
<dbReference type="KEGG" id="ddi:DDB_G0292266"/>
<dbReference type="dictyBase" id="DDB_G0292266">
    <property type="gene designation" value="amdA"/>
</dbReference>
<dbReference type="VEuPathDB" id="AmoebaDB:DDB_G0292266"/>
<dbReference type="eggNOG" id="KOG1096">
    <property type="taxonomic scope" value="Eukaryota"/>
</dbReference>
<dbReference type="HOGENOM" id="CLU_003782_4_2_1"/>
<dbReference type="InParanoid" id="Q54DD0"/>
<dbReference type="OMA" id="SHHEMQE"/>
<dbReference type="PhylomeDB" id="Q54DD0"/>
<dbReference type="Reactome" id="R-DDI-6798695">
    <property type="pathway name" value="Neutrophil degranulation"/>
</dbReference>
<dbReference type="Reactome" id="R-DDI-74217">
    <property type="pathway name" value="Purine salvage"/>
</dbReference>
<dbReference type="SABIO-RK" id="Q54DD0"/>
<dbReference type="UniPathway" id="UPA00591">
    <property type="reaction ID" value="UER00663"/>
</dbReference>
<dbReference type="PRO" id="PR:Q54DD0"/>
<dbReference type="Proteomes" id="UP000002195">
    <property type="component" value="Chromosome 6"/>
</dbReference>
<dbReference type="GO" id="GO:0005737">
    <property type="term" value="C:cytoplasm"/>
    <property type="evidence" value="ECO:0000305"/>
    <property type="project" value="dictyBase"/>
</dbReference>
<dbReference type="GO" id="GO:0005829">
    <property type="term" value="C:cytosol"/>
    <property type="evidence" value="ECO:0000318"/>
    <property type="project" value="GO_Central"/>
</dbReference>
<dbReference type="GO" id="GO:0003876">
    <property type="term" value="F:AMP deaminase activity"/>
    <property type="evidence" value="ECO:0000314"/>
    <property type="project" value="dictyBase"/>
</dbReference>
<dbReference type="GO" id="GO:0005524">
    <property type="term" value="F:ATP binding"/>
    <property type="evidence" value="ECO:0000305"/>
    <property type="project" value="dictyBase"/>
</dbReference>
<dbReference type="GO" id="GO:0046872">
    <property type="term" value="F:metal ion binding"/>
    <property type="evidence" value="ECO:0007669"/>
    <property type="project" value="UniProtKB-KW"/>
</dbReference>
<dbReference type="GO" id="GO:0046033">
    <property type="term" value="P:AMP metabolic process"/>
    <property type="evidence" value="ECO:0000318"/>
    <property type="project" value="GO_Central"/>
</dbReference>
<dbReference type="GO" id="GO:0001708">
    <property type="term" value="P:cell fate specification"/>
    <property type="evidence" value="ECO:0000315"/>
    <property type="project" value="dictyBase"/>
</dbReference>
<dbReference type="GO" id="GO:0006188">
    <property type="term" value="P:IMP biosynthetic process"/>
    <property type="evidence" value="ECO:0000318"/>
    <property type="project" value="GO_Central"/>
</dbReference>
<dbReference type="GO" id="GO:0032264">
    <property type="term" value="P:IMP salvage"/>
    <property type="evidence" value="ECO:0000314"/>
    <property type="project" value="dictyBase"/>
</dbReference>
<dbReference type="GO" id="GO:0009167">
    <property type="term" value="P:purine ribonucleoside monophosphate metabolic process"/>
    <property type="evidence" value="ECO:0000314"/>
    <property type="project" value="dictyBase"/>
</dbReference>
<dbReference type="GO" id="GO:0030435">
    <property type="term" value="P:sporulation resulting in formation of a cellular spore"/>
    <property type="evidence" value="ECO:0000315"/>
    <property type="project" value="dictyBase"/>
</dbReference>
<dbReference type="CDD" id="cd01319">
    <property type="entry name" value="AMPD"/>
    <property type="match status" value="1"/>
</dbReference>
<dbReference type="FunFam" id="4.10.800.20:FF:000001">
    <property type="entry name" value="AMP deaminase"/>
    <property type="match status" value="1"/>
</dbReference>
<dbReference type="FunFam" id="3.20.20.140:FF:000035">
    <property type="entry name" value="Probable amp deaminase"/>
    <property type="match status" value="1"/>
</dbReference>
<dbReference type="Gene3D" id="4.10.800.20">
    <property type="match status" value="1"/>
</dbReference>
<dbReference type="Gene3D" id="3.20.20.140">
    <property type="entry name" value="Metal-dependent hydrolases"/>
    <property type="match status" value="1"/>
</dbReference>
<dbReference type="InterPro" id="IPR006650">
    <property type="entry name" value="A/AMP_deam_AS"/>
</dbReference>
<dbReference type="InterPro" id="IPR006329">
    <property type="entry name" value="AMPD"/>
</dbReference>
<dbReference type="InterPro" id="IPR032466">
    <property type="entry name" value="Metal_Hydrolase"/>
</dbReference>
<dbReference type="NCBIfam" id="TIGR01429">
    <property type="entry name" value="AMP_deaminase"/>
    <property type="match status" value="1"/>
</dbReference>
<dbReference type="PANTHER" id="PTHR11359">
    <property type="entry name" value="AMP DEAMINASE"/>
    <property type="match status" value="1"/>
</dbReference>
<dbReference type="PANTHER" id="PTHR11359:SF0">
    <property type="entry name" value="AMP DEAMINASE"/>
    <property type="match status" value="1"/>
</dbReference>
<dbReference type="Pfam" id="PF19326">
    <property type="entry name" value="AMP_deaminase"/>
    <property type="match status" value="1"/>
</dbReference>
<dbReference type="SUPFAM" id="SSF51556">
    <property type="entry name" value="Metallo-dependent hydrolases"/>
    <property type="match status" value="1"/>
</dbReference>
<dbReference type="PROSITE" id="PS00485">
    <property type="entry name" value="A_DEAMINASE"/>
    <property type="match status" value="1"/>
</dbReference>
<comment type="function">
    <text evidence="4 6 8 9">Catalyzes the conversion of adenosine monophosphate (AMP) to inosine monophosphate (IMP) and ammonia (NH4(+)) (PubMed:11784104, PubMed:1916064). Participates in the regulation of the adenylated nucleotide pool and the interconversion to guanylated nucleotides during early morphodifferentiation (PubMed:17259634, PubMed:1916064).</text>
</comment>
<comment type="catalytic activity">
    <reaction evidence="4 6">
        <text>AMP + H2O + H(+) = IMP + NH4(+)</text>
        <dbReference type="Rhea" id="RHEA:14777"/>
        <dbReference type="ChEBI" id="CHEBI:15377"/>
        <dbReference type="ChEBI" id="CHEBI:15378"/>
        <dbReference type="ChEBI" id="CHEBI:28938"/>
        <dbReference type="ChEBI" id="CHEBI:58053"/>
        <dbReference type="ChEBI" id="CHEBI:456215"/>
        <dbReference type="EC" id="3.5.4.6"/>
    </reaction>
    <physiologicalReaction direction="left-to-right" evidence="4 6">
        <dbReference type="Rhea" id="RHEA:14778"/>
    </physiologicalReaction>
</comment>
<comment type="cofactor">
    <cofactor evidence="1">
        <name>Zn(2+)</name>
        <dbReference type="ChEBI" id="CHEBI:29105"/>
    </cofactor>
    <text evidence="1">Binds 1 zinc ion per subunit.</text>
</comment>
<comment type="activity regulation">
    <text evidence="6">Activated by ATP, inhibited by GTP, EDTA and inorganic phosphate.</text>
</comment>
<comment type="biophysicochemical properties">
    <kinetics>
        <KM evidence="6">1.6 mM for AMP</KM>
        <Vmax evidence="6">1.0 umol/min/mg enzyme</Vmax>
    </kinetics>
</comment>
<comment type="pathway">
    <text evidence="11 12">Purine metabolism; IMP biosynthesis via salvage pathway; IMP from AMP: step 1/1.</text>
</comment>
<comment type="subunit">
    <text evidence="6">Homodimer.</text>
</comment>
<comment type="subcellular location">
    <subcellularLocation>
        <location evidence="12">Cytoplasm</location>
    </subcellularLocation>
</comment>
<comment type="developmental stage">
    <text evidence="4 6">Expressed during normal growth and slightly more for the first 4 hours of development. Enzymatic activity increases for the first 5 hours of development and then tapers off.</text>
</comment>
<comment type="disruption phenotype">
    <text evidence="4 5">Cells grow normally until development occurs. Then they make a significantly increased proportion of prestalk cells, and develop fruiting bodies with short thick stalks and glassy sori with less than 5% normal spores. They have an increased content of pstA-type prestalk cells. Intracellular levels of inosine increase dramatically during development. This is cell autonomous, as the presence of equal numbers of wild-type cells does not alter the cell type proportion nor improve sporulation. Overexpression of the gene has no apparent effect on development (PubMed:11784104). Mutants lacking amdA form aspidocytes (a cell type able to resist detergent lysis and which are also resistant to some antibiotics) more readily than wild-type cells; their induction may involve AMP or other purine metabolites (PubMed:17259634).</text>
</comment>
<comment type="similarity">
    <text evidence="10">Belongs to the metallo-dependent hydrolases superfamily. Adenosine and AMP deaminases family.</text>
</comment>
<feature type="chain" id="PRO_0000327654" description="AMP deaminase">
    <location>
        <begin position="1"/>
        <end position="790"/>
    </location>
</feature>
<feature type="region of interest" description="Disordered" evidence="3">
    <location>
        <begin position="1"/>
        <end position="26"/>
    </location>
</feature>
<feature type="region of interest" description="Disordered" evidence="3">
    <location>
        <begin position="698"/>
        <end position="726"/>
    </location>
</feature>
<feature type="region of interest" description="Disordered" evidence="3">
    <location>
        <begin position="739"/>
        <end position="790"/>
    </location>
</feature>
<feature type="compositionally biased region" description="Polar residues" evidence="3">
    <location>
        <begin position="1"/>
        <end position="14"/>
    </location>
</feature>
<feature type="compositionally biased region" description="Low complexity" evidence="3">
    <location>
        <begin position="706"/>
        <end position="726"/>
    </location>
</feature>
<feature type="compositionally biased region" description="Low complexity" evidence="3">
    <location>
        <begin position="750"/>
        <end position="781"/>
    </location>
</feature>
<feature type="active site" description="Proton acceptor" evidence="2">
    <location>
        <position position="510"/>
    </location>
</feature>
<feature type="binding site" evidence="1">
    <location>
        <position position="221"/>
    </location>
    <ligand>
        <name>Zn(2+)</name>
        <dbReference type="ChEBI" id="CHEBI:29105"/>
        <note>catalytic</note>
    </ligand>
</feature>
<feature type="binding site" evidence="1">
    <location>
        <position position="223"/>
    </location>
    <ligand>
        <name>substrate</name>
    </ligand>
</feature>
<feature type="binding site" evidence="1">
    <location>
        <position position="223"/>
    </location>
    <ligand>
        <name>Zn(2+)</name>
        <dbReference type="ChEBI" id="CHEBI:29105"/>
        <note>catalytic</note>
    </ligand>
</feature>
<feature type="binding site" evidence="1">
    <location>
        <begin position="292"/>
        <end position="297"/>
    </location>
    <ligand>
        <name>substrate</name>
    </ligand>
</feature>
<feature type="binding site" evidence="1">
    <location>
        <position position="488"/>
    </location>
    <ligand>
        <name>Zn(2+)</name>
        <dbReference type="ChEBI" id="CHEBI:29105"/>
        <note>catalytic</note>
    </ligand>
</feature>
<feature type="binding site" evidence="1">
    <location>
        <position position="491"/>
    </location>
    <ligand>
        <name>substrate</name>
    </ligand>
</feature>
<feature type="binding site" evidence="1">
    <location>
        <position position="565"/>
    </location>
    <ligand>
        <name>Zn(2+)</name>
        <dbReference type="ChEBI" id="CHEBI:29105"/>
        <note>catalytic</note>
    </ligand>
</feature>
<feature type="binding site" evidence="1">
    <location>
        <begin position="566"/>
        <end position="569"/>
    </location>
    <ligand>
        <name>substrate</name>
    </ligand>
</feature>
<accession>Q54DD0</accession>
<accession>Q9NGX0</accession>
<protein>
    <recommendedName>
        <fullName evidence="9">AMP deaminase</fullName>
        <shortName evidence="7">AMPD1</shortName>
        <ecNumber evidence="4 6">3.5.4.6</ecNumber>
    </recommendedName>
</protein>
<keyword id="KW-0963">Cytoplasm</keyword>
<keyword id="KW-0217">Developmental protein</keyword>
<keyword id="KW-0221">Differentiation</keyword>
<keyword id="KW-0378">Hydrolase</keyword>
<keyword id="KW-0479">Metal-binding</keyword>
<keyword id="KW-0546">Nucleotide metabolism</keyword>
<keyword id="KW-1185">Reference proteome</keyword>
<keyword id="KW-0749">Sporulation</keyword>
<keyword id="KW-0862">Zinc</keyword>
<reference key="1">
    <citation type="journal article" date="2005" name="Nature">
        <title>The genome of the social amoeba Dictyostelium discoideum.</title>
        <authorList>
            <person name="Eichinger L."/>
            <person name="Pachebat J.A."/>
            <person name="Gloeckner G."/>
            <person name="Rajandream M.A."/>
            <person name="Sucgang R."/>
            <person name="Berriman M."/>
            <person name="Song J."/>
            <person name="Olsen R."/>
            <person name="Szafranski K."/>
            <person name="Xu Q."/>
            <person name="Tunggal B."/>
            <person name="Kummerfeld S."/>
            <person name="Madera M."/>
            <person name="Konfortov B.A."/>
            <person name="Rivero F."/>
            <person name="Bankier A.T."/>
            <person name="Lehmann R."/>
            <person name="Hamlin N."/>
            <person name="Davies R."/>
            <person name="Gaudet P."/>
            <person name="Fey P."/>
            <person name="Pilcher K."/>
            <person name="Chen G."/>
            <person name="Saunders D."/>
            <person name="Sodergren E.J."/>
            <person name="Davis P."/>
            <person name="Kerhornou A."/>
            <person name="Nie X."/>
            <person name="Hall N."/>
            <person name="Anjard C."/>
            <person name="Hemphill L."/>
            <person name="Bason N."/>
            <person name="Farbrother P."/>
            <person name="Desany B."/>
            <person name="Just E."/>
            <person name="Morio T."/>
            <person name="Rost R."/>
            <person name="Churcher C.M."/>
            <person name="Cooper J."/>
            <person name="Haydock S."/>
            <person name="van Driessche N."/>
            <person name="Cronin A."/>
            <person name="Goodhead I."/>
            <person name="Muzny D.M."/>
            <person name="Mourier T."/>
            <person name="Pain A."/>
            <person name="Lu M."/>
            <person name="Harper D."/>
            <person name="Lindsay R."/>
            <person name="Hauser H."/>
            <person name="James K.D."/>
            <person name="Quiles M."/>
            <person name="Madan Babu M."/>
            <person name="Saito T."/>
            <person name="Buchrieser C."/>
            <person name="Wardroper A."/>
            <person name="Felder M."/>
            <person name="Thangavelu M."/>
            <person name="Johnson D."/>
            <person name="Knights A."/>
            <person name="Loulseged H."/>
            <person name="Mungall K.L."/>
            <person name="Oliver K."/>
            <person name="Price C."/>
            <person name="Quail M.A."/>
            <person name="Urushihara H."/>
            <person name="Hernandez J."/>
            <person name="Rabbinowitsch E."/>
            <person name="Steffen D."/>
            <person name="Sanders M."/>
            <person name="Ma J."/>
            <person name="Kohara Y."/>
            <person name="Sharp S."/>
            <person name="Simmonds M.N."/>
            <person name="Spiegler S."/>
            <person name="Tivey A."/>
            <person name="Sugano S."/>
            <person name="White B."/>
            <person name="Walker D."/>
            <person name="Woodward J.R."/>
            <person name="Winckler T."/>
            <person name="Tanaka Y."/>
            <person name="Shaulsky G."/>
            <person name="Schleicher M."/>
            <person name="Weinstock G.M."/>
            <person name="Rosenthal A."/>
            <person name="Cox E.C."/>
            <person name="Chisholm R.L."/>
            <person name="Gibbs R.A."/>
            <person name="Loomis W.F."/>
            <person name="Platzer M."/>
            <person name="Kay R.R."/>
            <person name="Williams J.G."/>
            <person name="Dear P.H."/>
            <person name="Noegel A.A."/>
            <person name="Barrell B.G."/>
            <person name="Kuspa A."/>
        </authorList>
    </citation>
    <scope>NUCLEOTIDE SEQUENCE [LARGE SCALE GENOMIC DNA]</scope>
    <source>
        <strain>AX4</strain>
    </source>
</reference>
<reference key="2">
    <citation type="journal article" date="2002" name="Dev. Biol.">
        <title>Altered cell-type proportioning in Dictyostelium lacking adenosine monophosphate deaminase.</title>
        <authorList>
            <person name="Chae S.-C."/>
            <person name="Fuller D."/>
            <person name="Loomis W.F."/>
        </authorList>
    </citation>
    <scope>NUCLEOTIDE SEQUENCE [GENOMIC DNA] OF 48-790</scope>
    <scope>DISRUPTION PHENOTYPE</scope>
    <scope>DEVELOPMENTAL STAGE</scope>
    <scope>FUNCTION</scope>
    <scope>CATALYTIC ACTIVITY</scope>
    <source>
        <strain>AX4</strain>
    </source>
</reference>
<reference key="3">
    <citation type="journal article" date="1991" name="Differentiation">
        <title>Purification and characterization of developmentally regulated AMP deaminase from Dictyostelium discoideum.</title>
        <authorList>
            <person name="Malliaros D.P."/>
            <person name="Kozwich D.L."/>
            <person name="Jahngen E.G.E."/>
        </authorList>
    </citation>
    <scope>BIOPHYSICOCHEMICAL PROPERTIES</scope>
    <scope>SUBUNIT</scope>
    <scope>SUBCELLULAR LOCATION</scope>
    <scope>DEVELOPMENTAL STAGE</scope>
    <source>
        <strain>AX3</strain>
    </source>
</reference>
<reference key="4">
    <citation type="journal article" date="2007" name="Microbiology">
        <title>A new environmentally resistant cell type from Dictyostelium.</title>
        <authorList>
            <person name="Serafimidis I."/>
            <person name="Bloomfield G."/>
            <person name="Skelton J."/>
            <person name="Ivens A."/>
            <person name="Kay R.R."/>
        </authorList>
    </citation>
    <scope>FUNCTION</scope>
    <source>
        <strain>AX2</strain>
    </source>
</reference>